<sequence>YIYTQ</sequence>
<dbReference type="PDB" id="4Z5W">
    <property type="method" value="X-ray"/>
    <property type="resolution" value="2.20 A"/>
    <property type="chains" value="P/Q=1-5"/>
</dbReference>
<dbReference type="PDB" id="4Z61">
    <property type="method" value="X-ray"/>
    <property type="resolution" value="2.75 A"/>
    <property type="chains" value="P/Q=1-5"/>
</dbReference>
<dbReference type="PDB" id="4Z63">
    <property type="method" value="X-ray"/>
    <property type="resolution" value="2.51 A"/>
    <property type="chains" value="P=1-5"/>
</dbReference>
<dbReference type="PDB" id="4Z64">
    <property type="method" value="X-ray"/>
    <property type="resolution" value="2.66 A"/>
    <property type="chains" value="P=1-5"/>
</dbReference>
<dbReference type="PDBsum" id="4Z5W"/>
<dbReference type="PDBsum" id="4Z61"/>
<dbReference type="PDBsum" id="4Z63"/>
<dbReference type="PDBsum" id="4Z64"/>
<dbReference type="SMR" id="P58261"/>
<dbReference type="GO" id="GO:0005576">
    <property type="term" value="C:extracellular region"/>
    <property type="evidence" value="ECO:0007669"/>
    <property type="project" value="UniProtKB-SubCell"/>
</dbReference>
<dbReference type="GO" id="GO:0008083">
    <property type="term" value="F:growth factor activity"/>
    <property type="evidence" value="ECO:0007669"/>
    <property type="project" value="UniProtKB-KW"/>
</dbReference>
<comment type="function">
    <text>In presence of 2,4-D, stimulates proliferation of the cells, but does not stimulate differentiation into the somatic embryos.</text>
</comment>
<comment type="subcellular location">
    <subcellularLocation>
        <location>Secreted</location>
    </subcellularLocation>
</comment>
<comment type="PTM">
    <text evidence="1">Sulfation is important for activity and for the binding to a putative membrane receptor.</text>
</comment>
<comment type="similarity">
    <text evidence="3">Belongs to the phytosulfokine family.</text>
</comment>
<accession>P58261</accession>
<name>PSK_DAUCA</name>
<reference key="1">
    <citation type="journal article" date="2000" name="Plant Cell Physiol.">
        <title>A secreted peptide growth factor, phytosulfokine, acting as a stimulatory factor of carrot somatic embryo formation.</title>
        <authorList>
            <person name="Hanai H."/>
            <person name="Matsuno T."/>
            <person name="Yamamoto M."/>
            <person name="Matsubayashi Y."/>
            <person name="Kobayashi T."/>
            <person name="Kamada H."/>
            <person name="Sakagami Y."/>
        </authorList>
    </citation>
    <scope>PROTEIN SEQUENCE</scope>
    <scope>SULFATION AT TYR-1 AND TYR-3</scope>
    <scope>IDENTIFICATION BY MASS SPECTROMETRY</scope>
    <source>
        <strain>cv. US-Harumakigosun</strain>
    </source>
</reference>
<keyword id="KW-0002">3D-structure</keyword>
<keyword id="KW-0903">Direct protein sequencing</keyword>
<keyword id="KW-0339">Growth factor</keyword>
<keyword id="KW-0964">Secreted</keyword>
<keyword id="KW-0765">Sulfation</keyword>
<proteinExistence type="evidence at protein level"/>
<organism>
    <name type="scientific">Daucus carota</name>
    <name type="common">Wild carrot</name>
    <dbReference type="NCBI Taxonomy" id="4039"/>
    <lineage>
        <taxon>Eukaryota</taxon>
        <taxon>Viridiplantae</taxon>
        <taxon>Streptophyta</taxon>
        <taxon>Embryophyta</taxon>
        <taxon>Tracheophyta</taxon>
        <taxon>Spermatophyta</taxon>
        <taxon>Magnoliopsida</taxon>
        <taxon>eudicotyledons</taxon>
        <taxon>Gunneridae</taxon>
        <taxon>Pentapetalae</taxon>
        <taxon>asterids</taxon>
        <taxon>campanulids</taxon>
        <taxon>Apiales</taxon>
        <taxon>Apiaceae</taxon>
        <taxon>Apioideae</taxon>
        <taxon>Scandiceae</taxon>
        <taxon>Daucinae</taxon>
        <taxon>Daucus</taxon>
        <taxon>Daucus sect. Daucus</taxon>
    </lineage>
</organism>
<feature type="peptide" id="PRO_0000045865" description="Phytosulfokine-alpha">
    <location>
        <begin position="1"/>
        <end position="5"/>
    </location>
</feature>
<feature type="peptide" id="PRO_0000024060" description="Phytosulfokine-beta">
    <location>
        <begin position="1"/>
        <end position="4"/>
    </location>
</feature>
<feature type="modified residue" description="Sulfotyrosine" evidence="2">
    <location>
        <position position="1"/>
    </location>
</feature>
<feature type="modified residue" description="Sulfotyrosine" evidence="2">
    <location>
        <position position="3"/>
    </location>
</feature>
<evidence type="ECO:0000250" key="1"/>
<evidence type="ECO:0000269" key="2">
    <source>
    </source>
</evidence>
<evidence type="ECO:0000305" key="3"/>
<protein>
    <recommendedName>
        <fullName>Phytosulfokine-alpha</fullName>
        <shortName>PSK-alpha</shortName>
    </recommendedName>
    <component>
        <recommendedName>
            <fullName>Phytosulfokine-beta</fullName>
            <shortName>PSK-beta</shortName>
        </recommendedName>
    </component>
</protein>